<dbReference type="EMBL" id="J05080">
    <property type="protein sequence ID" value="AAA31279.1"/>
    <property type="molecule type" value="mRNA"/>
</dbReference>
<dbReference type="PIR" id="A34373">
    <property type="entry name" value="A34373"/>
</dbReference>
<dbReference type="RefSeq" id="NP_001075703.1">
    <property type="nucleotide sequence ID" value="NM_001082234.1"/>
</dbReference>
<dbReference type="MINT" id="P16230"/>
<dbReference type="GeneID" id="100009049"/>
<dbReference type="KEGG" id="ocu:100009049"/>
<dbReference type="CTD" id="3270"/>
<dbReference type="InParanoid" id="P16230"/>
<dbReference type="OrthoDB" id="9428907at2759"/>
<dbReference type="Proteomes" id="UP000001811">
    <property type="component" value="Unplaced"/>
</dbReference>
<dbReference type="GO" id="GO:0033018">
    <property type="term" value="C:sarcoplasmic reticulum lumen"/>
    <property type="evidence" value="ECO:0007669"/>
    <property type="project" value="UniProtKB-SubCell"/>
</dbReference>
<dbReference type="GO" id="GO:0005509">
    <property type="term" value="F:calcium ion binding"/>
    <property type="evidence" value="ECO:0007669"/>
    <property type="project" value="InterPro"/>
</dbReference>
<dbReference type="InterPro" id="IPR002134">
    <property type="entry name" value="His-rich_Ca-bd_rpt"/>
</dbReference>
<dbReference type="InterPro" id="IPR019552">
    <property type="entry name" value="Hist_rich_Ca-bd"/>
</dbReference>
<dbReference type="InterPro" id="IPR015666">
    <property type="entry name" value="HRC"/>
</dbReference>
<dbReference type="PANTHER" id="PTHR15054">
    <property type="entry name" value="HISTIDINE-RICH CALCIUM-BINDING PROTEIN-RELATED"/>
    <property type="match status" value="1"/>
</dbReference>
<dbReference type="PANTHER" id="PTHR15054:SF3">
    <property type="entry name" value="SARCOPLASMIC RETICULUM HISTIDINE-RICH CALCIUM-BINDING PROTEIN"/>
    <property type="match status" value="1"/>
</dbReference>
<dbReference type="Pfam" id="PF10529">
    <property type="entry name" value="Hist_rich_Ca-bd"/>
    <property type="match status" value="11"/>
</dbReference>
<dbReference type="PROSITE" id="PS00328">
    <property type="entry name" value="HCP"/>
    <property type="match status" value="10"/>
</dbReference>
<sequence>MGCRGPWLHTCLLWAAVASLLLPPAVTQQLRGAGLGPSTWINNAGAPGPSGEAAAAGLGHHGHSHRSPGEENEDVSMENGHHFWSHRDHGETDDEVSREYGHQPQGHRYHSPEAGDESVSEEGVHREQARQAPGHGGHGEAGAEDLAEHGSHGHGHEEEDEDVISSERPRHVLRRAPRGHGGEEEGEEEEEEEEVSPEHRHRGHGKEDEEDEDDDSTESDRHQAHRHRGHREEEDEDDDDDEGDSTESDHHQAHRHRGHEEEEDEEDDDDEGDSTESDRHQAHRHRGHREEEDEDDDDEGDSTESDRHQAHRHRGHREEEDDDDDDDEGDSTESDRHQAHRHRGHREEEDEDDDDEGDSTESDRHQAHRHRGHREEEDEDDDDEGDSTESDRHQAHRHRGHREEEDEDDDDEGDSTESDHHQAHRHRGHREEEDEEDDDEGDSTESDRHQAHRHRGHGEEEDEDDDDEGEHHHVPHRGHRGHEEDDGGDDDDGDDSTENGHQAHRHQGHGKEEAEVTSDEHHHHVPDHGHQGHGDKEGEEEGVSTDHWHQVPRHAHHGPGGEEEGGEEELTVKAGHHVASHPPPGHRSREGHAEEHQTEVPGHHQHRMGDTDTSAERGHPASSPRQQGHPPEDTVHHHRGSLKEEVGPESPGPAGVKDGSRVKRGGSEEEEEQKGTHHHSLEDEEDEEEGHGRSLSQEDQEEEDRRGESAKVQAPLRHHREEEEEEEEEEEEEGRLPFTIIPNPLSGREAAGGASSEESAEDTGPEDTQEYGNYQQGSLCGYCTFCNRCTECEHCHCDEDSMGEHCDQCQHCQFCYLCPLVCETVCTPGSYVDYFSSSLYKALADMLETPEP</sequence>
<keyword id="KW-0106">Calcium</keyword>
<keyword id="KW-0903">Direct protein sequencing</keyword>
<keyword id="KW-0597">Phosphoprotein</keyword>
<keyword id="KW-0873">Pyrrolidone carboxylic acid</keyword>
<keyword id="KW-1185">Reference proteome</keyword>
<keyword id="KW-0677">Repeat</keyword>
<keyword id="KW-0703">Sarcoplasmic reticulum</keyword>
<keyword id="KW-0732">Signal</keyword>
<protein>
    <recommendedName>
        <fullName>Sarcoplasmic reticulum histidine-rich calcium-binding protein</fullName>
    </recommendedName>
</protein>
<organism>
    <name type="scientific">Oryctolagus cuniculus</name>
    <name type="common">Rabbit</name>
    <dbReference type="NCBI Taxonomy" id="9986"/>
    <lineage>
        <taxon>Eukaryota</taxon>
        <taxon>Metazoa</taxon>
        <taxon>Chordata</taxon>
        <taxon>Craniata</taxon>
        <taxon>Vertebrata</taxon>
        <taxon>Euteleostomi</taxon>
        <taxon>Mammalia</taxon>
        <taxon>Eutheria</taxon>
        <taxon>Euarchontoglires</taxon>
        <taxon>Glires</taxon>
        <taxon>Lagomorpha</taxon>
        <taxon>Leporidae</taxon>
        <taxon>Oryctolagus</taxon>
    </lineage>
</organism>
<proteinExistence type="evidence at protein level"/>
<reference key="1">
    <citation type="journal article" date="1989" name="J. Biol. Chem.">
        <title>Molecular cloning of a histidine-rich Ca2+-binding protein of sarcoplasmic reticulum that contains highly conserved repeated elements.</title>
        <authorList>
            <person name="Hofmann S.L."/>
            <person name="Goldstein J.L."/>
            <person name="Orth K."/>
            <person name="Moomaw C.R."/>
            <person name="Slaughter C.A."/>
            <person name="Brown M.S."/>
        </authorList>
    </citation>
    <scope>NUCLEOTIDE SEQUENCE [MRNA]</scope>
    <scope>PARTIAL PROTEIN SEQUENCE</scope>
    <scope>PYROGLUTAMATE FORMATION AT GLN-28</scope>
    <source>
        <tissue>Skeletal muscle</tissue>
    </source>
</reference>
<comment type="function">
    <text>May play a role in the regulation of calcium sequestration or release in the SR of skeletal and cardiac muscle.</text>
</comment>
<comment type="subcellular location">
    <subcellularLocation>
        <location>Sarcoplasmic reticulum lumen</location>
    </subcellularLocation>
</comment>
<comment type="PTM">
    <text evidence="4">The N-terminus is blocked.</text>
</comment>
<comment type="similarity">
    <text evidence="5">Belongs to the HRC family.</text>
</comment>
<accession>P16230</accession>
<gene>
    <name type="primary">HRC</name>
    <name type="synonym">HCP</name>
</gene>
<name>SRCH_RABIT</name>
<evidence type="ECO:0000250" key="1">
    <source>
        <dbReference type="UniProtKB" id="P23327"/>
    </source>
</evidence>
<evidence type="ECO:0000255" key="2"/>
<evidence type="ECO:0000256" key="3">
    <source>
        <dbReference type="SAM" id="MobiDB-lite"/>
    </source>
</evidence>
<evidence type="ECO:0000269" key="4">
    <source>
    </source>
</evidence>
<evidence type="ECO:0000305" key="5"/>
<evidence type="ECO:0000305" key="6">
    <source>
    </source>
</evidence>
<feature type="signal peptide" evidence="2">
    <location>
        <begin position="1"/>
        <end position="27"/>
    </location>
</feature>
<feature type="chain" id="PRO_0000022415" description="Sarcoplasmic reticulum histidine-rich calcium-binding protein">
    <location>
        <begin position="28"/>
        <end position="852"/>
    </location>
</feature>
<feature type="repeat" description="1-1">
    <location>
        <begin position="59"/>
        <end position="79"/>
    </location>
</feature>
<feature type="repeat" description="1-2">
    <location>
        <begin position="80"/>
        <end position="100"/>
    </location>
</feature>
<feature type="repeat" description="2-1">
    <location>
        <begin position="199"/>
        <end position="224"/>
    </location>
</feature>
<feature type="repeat" description="2-2">
    <location>
        <begin position="225"/>
        <end position="253"/>
    </location>
</feature>
<feature type="repeat" description="2-3">
    <location>
        <begin position="254"/>
        <end position="282"/>
    </location>
</feature>
<feature type="repeat" description="2-4">
    <location>
        <begin position="283"/>
        <end position="310"/>
    </location>
</feature>
<feature type="repeat" description="2-5">
    <location>
        <begin position="311"/>
        <end position="339"/>
    </location>
</feature>
<feature type="repeat" description="2-6">
    <location>
        <begin position="340"/>
        <end position="367"/>
    </location>
</feature>
<feature type="repeat" description="2-7">
    <location>
        <begin position="368"/>
        <end position="395"/>
    </location>
</feature>
<feature type="repeat" description="2-8">
    <location>
        <begin position="396"/>
        <end position="423"/>
    </location>
</feature>
<feature type="repeat" description="2-9">
    <location>
        <begin position="424"/>
        <end position="451"/>
    </location>
</feature>
<feature type="repeat" description="2-10">
    <location>
        <begin position="452"/>
        <end position="470"/>
    </location>
</feature>
<feature type="region of interest" description="Disordered" evidence="3">
    <location>
        <begin position="44"/>
        <end position="770"/>
    </location>
</feature>
<feature type="region of interest" description="2 X approximate tandem repeats">
    <location>
        <begin position="59"/>
        <end position="100"/>
    </location>
</feature>
<feature type="region of interest" description="10 X tandem repeats, acidic">
    <location>
        <begin position="199"/>
        <end position="470"/>
    </location>
</feature>
<feature type="region of interest" description="4 X approximate tandem repeats">
    <location>
        <begin position="471"/>
        <end position="585"/>
    </location>
</feature>
<feature type="region of interest" description="Metal-binding" evidence="2">
    <location>
        <begin position="780"/>
        <end position="826"/>
    </location>
</feature>
<feature type="compositionally biased region" description="Low complexity" evidence="3">
    <location>
        <begin position="44"/>
        <end position="58"/>
    </location>
</feature>
<feature type="compositionally biased region" description="Basic and acidic residues" evidence="3">
    <location>
        <begin position="79"/>
        <end position="101"/>
    </location>
</feature>
<feature type="compositionally biased region" description="Basic and acidic residues" evidence="3">
    <location>
        <begin position="146"/>
        <end position="157"/>
    </location>
</feature>
<feature type="compositionally biased region" description="Acidic residues" evidence="3">
    <location>
        <begin position="184"/>
        <end position="195"/>
    </location>
</feature>
<feature type="compositionally biased region" description="Acidic residues" evidence="3">
    <location>
        <begin position="208"/>
        <end position="217"/>
    </location>
</feature>
<feature type="compositionally biased region" description="Acidic residues" evidence="3">
    <location>
        <begin position="233"/>
        <end position="246"/>
    </location>
</feature>
<feature type="compositionally biased region" description="Acidic residues" evidence="3">
    <location>
        <begin position="261"/>
        <end position="275"/>
    </location>
</feature>
<feature type="compositionally biased region" description="Acidic residues" evidence="3">
    <location>
        <begin position="291"/>
        <end position="303"/>
    </location>
</feature>
<feature type="compositionally biased region" description="Acidic residues" evidence="3">
    <location>
        <begin position="319"/>
        <end position="332"/>
    </location>
</feature>
<feature type="compositionally biased region" description="Acidic residues" evidence="3">
    <location>
        <begin position="348"/>
        <end position="360"/>
    </location>
</feature>
<feature type="compositionally biased region" description="Acidic residues" evidence="3">
    <location>
        <begin position="376"/>
        <end position="388"/>
    </location>
</feature>
<feature type="compositionally biased region" description="Acidic residues" evidence="3">
    <location>
        <begin position="404"/>
        <end position="416"/>
    </location>
</feature>
<feature type="compositionally biased region" description="Acidic residues" evidence="3">
    <location>
        <begin position="432"/>
        <end position="444"/>
    </location>
</feature>
<feature type="compositionally biased region" description="Acidic residues" evidence="3">
    <location>
        <begin position="459"/>
        <end position="468"/>
    </location>
</feature>
<feature type="compositionally biased region" description="Acidic residues" evidence="3">
    <location>
        <begin position="484"/>
        <end position="497"/>
    </location>
</feature>
<feature type="compositionally biased region" description="Basic and acidic residues" evidence="3">
    <location>
        <begin position="509"/>
        <end position="536"/>
    </location>
</feature>
<feature type="compositionally biased region" description="Basic and acidic residues" evidence="3">
    <location>
        <begin position="587"/>
        <end position="619"/>
    </location>
</feature>
<feature type="compositionally biased region" description="Basic and acidic residues" evidence="3">
    <location>
        <begin position="630"/>
        <end position="646"/>
    </location>
</feature>
<feature type="compositionally biased region" description="Basic and acidic residues" evidence="3">
    <location>
        <begin position="658"/>
        <end position="681"/>
    </location>
</feature>
<feature type="compositionally biased region" description="Acidic residues" evidence="3">
    <location>
        <begin position="722"/>
        <end position="733"/>
    </location>
</feature>
<feature type="compositionally biased region" description="Low complexity" evidence="3">
    <location>
        <begin position="746"/>
        <end position="757"/>
    </location>
</feature>
<feature type="compositionally biased region" description="Acidic residues" evidence="3">
    <location>
        <begin position="758"/>
        <end position="769"/>
    </location>
</feature>
<feature type="modified residue" description="Pyrrolidone carboxylic acid" evidence="6">
    <location>
        <position position="28"/>
    </location>
</feature>
<feature type="modified residue" description="Phosphoserine" evidence="1">
    <location>
        <position position="120"/>
    </location>
</feature>
<feature type="modified residue" description="Phosphoserine" evidence="1">
    <location>
        <position position="518"/>
    </location>
</feature>
<feature type="modified residue" description="Phosphoserine" evidence="1">
    <location>
        <position position="544"/>
    </location>
</feature>
<feature type="modified residue" description="Phosphoserine" evidence="1">
    <location>
        <position position="614"/>
    </location>
</feature>